<name>UBE3D_BOVIN</name>
<comment type="function">
    <text evidence="1">E3 ubiquitin-protein ligase which accepts ubiquitin from specific E2 ubiquitin-conjugating enzymes, and transfers it to substrates, generally promoting their degradation by the proteasome. Independently of its E3 ubiquitin-protein ligase activity, acts as an inhibitor of CPSF3 endonuclease activity by blocking CPSF3 active site.</text>
</comment>
<comment type="catalytic activity">
    <reaction evidence="1">
        <text>S-ubiquitinyl-[E2 ubiquitin-conjugating enzyme]-L-cysteine + [acceptor protein]-L-lysine = [E2 ubiquitin-conjugating enzyme]-L-cysteine + N(6)-ubiquitinyl-[acceptor protein]-L-lysine.</text>
        <dbReference type="EC" id="2.3.2.26"/>
    </reaction>
</comment>
<comment type="pathway">
    <text evidence="1">Protein modification; protein ubiquitination.</text>
</comment>
<comment type="subunit">
    <text evidence="1">Interacts with UBE2C/UbcH10 (E2 ubiquitin-conjugating enzyme). In vitro, interacts with cyclin-B.</text>
</comment>
<comment type="subcellular location">
    <subcellularLocation>
        <location evidence="1">Cytoplasm</location>
    </subcellularLocation>
</comment>
<comment type="domain">
    <text evidence="1">The C-terminal half (AA 188-389) is able to bind cyclin-B and shows a self-ubiquitination activity (mono-, poly, or multi-ubiquitination) in a HECT-like sequence dependent manner.</text>
</comment>
<comment type="domain">
    <text evidence="1">The BRAT1-like motif mediates inhibition of the endonuclease activity of CPSF3 by forming hyrogen bond and hydrophobic interactions with the active site of CPSF3: Cys-144 coordinates one of the two active site zinc ions of CPSF3.</text>
</comment>
<comment type="PTM">
    <text evidence="1">Ubiquitinated by UBCH10 (E2 ubiquitin-conjugating enzyme).</text>
</comment>
<gene>
    <name type="primary">UBE3D</name>
    <name type="synonym">H10BH</name>
    <name type="synonym">UBE2CBP</name>
</gene>
<accession>Q1JQA1</accession>
<organism>
    <name type="scientific">Bos taurus</name>
    <name type="common">Bovine</name>
    <dbReference type="NCBI Taxonomy" id="9913"/>
    <lineage>
        <taxon>Eukaryota</taxon>
        <taxon>Metazoa</taxon>
        <taxon>Chordata</taxon>
        <taxon>Craniata</taxon>
        <taxon>Vertebrata</taxon>
        <taxon>Euteleostomi</taxon>
        <taxon>Mammalia</taxon>
        <taxon>Eutheria</taxon>
        <taxon>Laurasiatheria</taxon>
        <taxon>Artiodactyla</taxon>
        <taxon>Ruminantia</taxon>
        <taxon>Pecora</taxon>
        <taxon>Bovidae</taxon>
        <taxon>Bovinae</taxon>
        <taxon>Bos</taxon>
    </lineage>
</organism>
<proteinExistence type="evidence at transcript level"/>
<keyword id="KW-0007">Acetylation</keyword>
<keyword id="KW-0963">Cytoplasm</keyword>
<keyword id="KW-0479">Metal-binding</keyword>
<keyword id="KW-1185">Reference proteome</keyword>
<keyword id="KW-0808">Transferase</keyword>
<keyword id="KW-0832">Ubl conjugation</keyword>
<keyword id="KW-0833">Ubl conjugation pathway</keyword>
<keyword id="KW-0862">Zinc</keyword>
<evidence type="ECO:0000250" key="1">
    <source>
        <dbReference type="UniProtKB" id="Q7Z6J8"/>
    </source>
</evidence>
<evidence type="ECO:0000305" key="2"/>
<dbReference type="EC" id="2.3.2.26"/>
<dbReference type="EMBL" id="BC116118">
    <property type="protein sequence ID" value="AAI16119.1"/>
    <property type="molecule type" value="mRNA"/>
</dbReference>
<dbReference type="RefSeq" id="NP_001069179.1">
    <property type="nucleotide sequence ID" value="NM_001075711.1"/>
</dbReference>
<dbReference type="FunCoup" id="Q1JQA1">
    <property type="interactions" value="1207"/>
</dbReference>
<dbReference type="STRING" id="9913.ENSBTAP00000073982"/>
<dbReference type="PaxDb" id="9913-ENSBTAP00000037931"/>
<dbReference type="GeneID" id="515386"/>
<dbReference type="KEGG" id="bta:515386"/>
<dbReference type="CTD" id="90025"/>
<dbReference type="VEuPathDB" id="HostDB:ENSBTAG00000019418"/>
<dbReference type="eggNOG" id="KOG4784">
    <property type="taxonomic scope" value="Eukaryota"/>
</dbReference>
<dbReference type="HOGENOM" id="CLU_060972_0_0_1"/>
<dbReference type="InParanoid" id="Q1JQA1"/>
<dbReference type="OMA" id="DCFTGDS"/>
<dbReference type="OrthoDB" id="66510at2759"/>
<dbReference type="TreeFam" id="TF324684"/>
<dbReference type="Reactome" id="R-BTA-983168">
    <property type="pathway name" value="Antigen processing: Ubiquitination &amp; Proteasome degradation"/>
</dbReference>
<dbReference type="UniPathway" id="UPA00143"/>
<dbReference type="Proteomes" id="UP000009136">
    <property type="component" value="Chromosome 9"/>
</dbReference>
<dbReference type="Bgee" id="ENSBTAG00000019418">
    <property type="expression patterns" value="Expressed in choroid plexus and 108 other cell types or tissues"/>
</dbReference>
<dbReference type="GO" id="GO:0005829">
    <property type="term" value="C:cytosol"/>
    <property type="evidence" value="ECO:0000318"/>
    <property type="project" value="GO_Central"/>
</dbReference>
<dbReference type="GO" id="GO:0005634">
    <property type="term" value="C:nucleus"/>
    <property type="evidence" value="ECO:0000318"/>
    <property type="project" value="GO_Central"/>
</dbReference>
<dbReference type="GO" id="GO:0000151">
    <property type="term" value="C:ubiquitin ligase complex"/>
    <property type="evidence" value="ECO:0000318"/>
    <property type="project" value="GO_Central"/>
</dbReference>
<dbReference type="GO" id="GO:0030332">
    <property type="term" value="F:cyclin binding"/>
    <property type="evidence" value="ECO:0000318"/>
    <property type="project" value="GO_Central"/>
</dbReference>
<dbReference type="GO" id="GO:0031624">
    <property type="term" value="F:ubiquitin conjugating enzyme binding"/>
    <property type="evidence" value="ECO:0000318"/>
    <property type="project" value="GO_Central"/>
</dbReference>
<dbReference type="GO" id="GO:0061630">
    <property type="term" value="F:ubiquitin protein ligase activity"/>
    <property type="evidence" value="ECO:0000318"/>
    <property type="project" value="GO_Central"/>
</dbReference>
<dbReference type="GO" id="GO:0043161">
    <property type="term" value="P:proteasome-mediated ubiquitin-dependent protein catabolic process"/>
    <property type="evidence" value="ECO:0000318"/>
    <property type="project" value="GO_Central"/>
</dbReference>
<dbReference type="GO" id="GO:0051865">
    <property type="term" value="P:protein autoubiquitination"/>
    <property type="evidence" value="ECO:0000318"/>
    <property type="project" value="GO_Central"/>
</dbReference>
<dbReference type="GO" id="GO:0006513">
    <property type="term" value="P:protein monoubiquitination"/>
    <property type="evidence" value="ECO:0000318"/>
    <property type="project" value="GO_Central"/>
</dbReference>
<dbReference type="GO" id="GO:0000209">
    <property type="term" value="P:protein polyubiquitination"/>
    <property type="evidence" value="ECO:0000318"/>
    <property type="project" value="GO_Central"/>
</dbReference>
<dbReference type="InterPro" id="IPR019193">
    <property type="entry name" value="UBQ-conj_enz_E2-bd_prot"/>
</dbReference>
<dbReference type="PANTHER" id="PTHR31531:SF2">
    <property type="entry name" value="E3 UBIQUITIN-PROTEIN LIGASE E3D"/>
    <property type="match status" value="1"/>
</dbReference>
<dbReference type="PANTHER" id="PTHR31531">
    <property type="entry name" value="E3 UBIQUITIN-PROTEIN LIGASE E3D FAMILY MEMBER"/>
    <property type="match status" value="1"/>
</dbReference>
<dbReference type="Pfam" id="PF09814">
    <property type="entry name" value="HECT_2"/>
    <property type="match status" value="1"/>
</dbReference>
<reference key="1">
    <citation type="submission" date="2006-05" db="EMBL/GenBank/DDBJ databases">
        <authorList>
            <consortium name="NIH - Mammalian Gene Collection (MGC) project"/>
        </authorList>
    </citation>
    <scope>NUCLEOTIDE SEQUENCE [LARGE SCALE MRNA]</scope>
    <source>
        <strain>Hereford</strain>
        <tissue>Ascending colon</tissue>
    </source>
</reference>
<sequence length="389" mass="43392">MAAVAAEARVFLEVRRRLQSALLILGDSKEGGLPMAVSVTPSSLRMQSPGGCTELRLPAGVRLAPSTCRGLQHVPGDGLHLRLHARAESRPELISVFNQSSQDQECCTFYCQSCGEVIIRDRMLLRVLPLPGDNWGALVDEWCCHPDPFANKPLHPRENDCFTGDCFYLVNLKSDLWQPRPEGAPVETHHLSSENHLKLKPKANTKVICKRCKVMLGETVSSETTKFYMTEIIILPSERNFPIIPRSQFVQSVLAQCVVELSSARSTFRFTIQGHDDKVYILLWLLNSDSLVIESLGQYTNIKKFPVLEDVLKPDSNSACNAVKVLYQPCIKSRNAELSSLWENDLSVHSLTLPSTTCLELLLILSKSNATLPPSLRCMNSFQVAFLKM</sequence>
<feature type="initiator methionine" description="Removed" evidence="1">
    <location>
        <position position="1"/>
    </location>
</feature>
<feature type="chain" id="PRO_0000311189" description="E3 ubiquitin-protein ligase E3D">
    <location>
        <begin position="2"/>
        <end position="389"/>
    </location>
</feature>
<feature type="region of interest" description="Interaction with UBE2C" evidence="1">
    <location>
        <begin position="235"/>
        <end position="257"/>
    </location>
</feature>
<feature type="region of interest" description="HECT-like" evidence="1">
    <location>
        <begin position="353"/>
        <end position="389"/>
    </location>
</feature>
<feature type="short sequence motif" description="BRAT1-like motif" evidence="1">
    <location>
        <begin position="129"/>
        <end position="159"/>
    </location>
</feature>
<feature type="binding site" evidence="1">
    <location>
        <position position="144"/>
    </location>
    <ligand>
        <name>Zn(2+)</name>
        <dbReference type="ChEBI" id="CHEBI:29105"/>
    </ligand>
</feature>
<feature type="modified residue" description="N-acetylalanine" evidence="1">
    <location>
        <position position="2"/>
    </location>
</feature>
<protein>
    <recommendedName>
        <fullName>E3 ubiquitin-protein ligase E3D</fullName>
        <ecNumber>2.3.2.26</ecNumber>
    </recommendedName>
    <alternativeName>
        <fullName evidence="2">HECT-type E3 ubiquitin transferase E3D</fullName>
    </alternativeName>
    <alternativeName>
        <fullName>UbcH10-binding protein with a HECT-like domain</fullName>
    </alternativeName>
    <alternativeName>
        <fullName>Ubiquitin-conjugating enzyme E2C-binding protein</fullName>
    </alternativeName>
</protein>